<comment type="function">
    <text evidence="1">Required to facilitate the formation of correct disulfide bonds in some periplasmic proteins and for the assembly of the periplasmic c-type cytochromes. Acts by transferring electrons from cytoplasmic thioredoxin to the periplasm. This transfer involves a cascade of disulfide bond formation and reduction steps (By similarity).</text>
</comment>
<comment type="catalytic activity">
    <reaction>
        <text>[protein]-dithiol + NAD(+) = [protein]-disulfide + NADH + H(+)</text>
        <dbReference type="Rhea" id="RHEA:18749"/>
        <dbReference type="Rhea" id="RHEA-COMP:10593"/>
        <dbReference type="Rhea" id="RHEA-COMP:10594"/>
        <dbReference type="ChEBI" id="CHEBI:15378"/>
        <dbReference type="ChEBI" id="CHEBI:29950"/>
        <dbReference type="ChEBI" id="CHEBI:50058"/>
        <dbReference type="ChEBI" id="CHEBI:57540"/>
        <dbReference type="ChEBI" id="CHEBI:57945"/>
        <dbReference type="EC" id="1.8.1.8"/>
    </reaction>
</comment>
<comment type="catalytic activity">
    <reaction>
        <text>[protein]-dithiol + NADP(+) = [protein]-disulfide + NADPH + H(+)</text>
        <dbReference type="Rhea" id="RHEA:18753"/>
        <dbReference type="Rhea" id="RHEA-COMP:10593"/>
        <dbReference type="Rhea" id="RHEA-COMP:10594"/>
        <dbReference type="ChEBI" id="CHEBI:15378"/>
        <dbReference type="ChEBI" id="CHEBI:29950"/>
        <dbReference type="ChEBI" id="CHEBI:50058"/>
        <dbReference type="ChEBI" id="CHEBI:57783"/>
        <dbReference type="ChEBI" id="CHEBI:58349"/>
        <dbReference type="EC" id="1.8.1.8"/>
    </reaction>
</comment>
<comment type="subcellular location">
    <subcellularLocation>
        <location evidence="1">Cell inner membrane</location>
        <topology evidence="1">Multi-pass membrane protein</topology>
    </subcellularLocation>
</comment>
<comment type="similarity">
    <text evidence="3">Belongs to the thioredoxin family. DsbD subfamily.</text>
</comment>
<name>DSBD_TATCI</name>
<accession>Q9XDB2</accession>
<dbReference type="EC" id="1.8.1.8"/>
<dbReference type="EMBL" id="AF102175">
    <property type="protein sequence ID" value="AAD38449.1"/>
    <property type="molecule type" value="Genomic_DNA"/>
</dbReference>
<dbReference type="SMR" id="Q9XDB2"/>
<dbReference type="GO" id="GO:0005886">
    <property type="term" value="C:plasma membrane"/>
    <property type="evidence" value="ECO:0007669"/>
    <property type="project" value="UniProtKB-SubCell"/>
</dbReference>
<dbReference type="GO" id="GO:0009055">
    <property type="term" value="F:electron transfer activity"/>
    <property type="evidence" value="ECO:0007669"/>
    <property type="project" value="UniProtKB-UniRule"/>
</dbReference>
<dbReference type="GO" id="GO:0047134">
    <property type="term" value="F:protein-disulfide reductase [NAD(P)H] activity"/>
    <property type="evidence" value="ECO:0007669"/>
    <property type="project" value="UniProtKB-UniRule"/>
</dbReference>
<dbReference type="GO" id="GO:0045454">
    <property type="term" value="P:cell redox homeostasis"/>
    <property type="evidence" value="ECO:0007669"/>
    <property type="project" value="TreeGrafter"/>
</dbReference>
<dbReference type="GO" id="GO:0017004">
    <property type="term" value="P:cytochrome complex assembly"/>
    <property type="evidence" value="ECO:0007669"/>
    <property type="project" value="UniProtKB-UniRule"/>
</dbReference>
<dbReference type="CDD" id="cd02953">
    <property type="entry name" value="DsbDgamma"/>
    <property type="match status" value="1"/>
</dbReference>
<dbReference type="FunFam" id="3.40.30.10:FF:000116">
    <property type="entry name" value="Thiol:disulfide interchange protein DsbD"/>
    <property type="match status" value="1"/>
</dbReference>
<dbReference type="Gene3D" id="3.40.30.10">
    <property type="entry name" value="Glutaredoxin"/>
    <property type="match status" value="1"/>
</dbReference>
<dbReference type="Gene3D" id="2.60.40.1250">
    <property type="entry name" value="Thiol:disulfide interchange protein DsbD, N-terminal domain"/>
    <property type="match status" value="1"/>
</dbReference>
<dbReference type="HAMAP" id="MF_00399">
    <property type="entry name" value="DbsD"/>
    <property type="match status" value="1"/>
</dbReference>
<dbReference type="InterPro" id="IPR003834">
    <property type="entry name" value="Cyt_c_assmbl_TM_dom"/>
</dbReference>
<dbReference type="InterPro" id="IPR035671">
    <property type="entry name" value="DsbD_gamma"/>
</dbReference>
<dbReference type="InterPro" id="IPR028250">
    <property type="entry name" value="DsbDN"/>
</dbReference>
<dbReference type="InterPro" id="IPR036929">
    <property type="entry name" value="DsbDN_sf"/>
</dbReference>
<dbReference type="InterPro" id="IPR022910">
    <property type="entry name" value="Thiol_diS_interchange_DbsD"/>
</dbReference>
<dbReference type="InterPro" id="IPR012336">
    <property type="entry name" value="Thioredoxin-like_fold"/>
</dbReference>
<dbReference type="InterPro" id="IPR036249">
    <property type="entry name" value="Thioredoxin-like_sf"/>
</dbReference>
<dbReference type="InterPro" id="IPR017937">
    <property type="entry name" value="Thioredoxin_CS"/>
</dbReference>
<dbReference type="InterPro" id="IPR013766">
    <property type="entry name" value="Thioredoxin_domain"/>
</dbReference>
<dbReference type="NCBIfam" id="NF001419">
    <property type="entry name" value="PRK00293.1"/>
    <property type="match status" value="1"/>
</dbReference>
<dbReference type="PANTHER" id="PTHR32234">
    <property type="entry name" value="THIOL:DISULFIDE INTERCHANGE PROTEIN DSBD"/>
    <property type="match status" value="1"/>
</dbReference>
<dbReference type="PANTHER" id="PTHR32234:SF0">
    <property type="entry name" value="THIOL:DISULFIDE INTERCHANGE PROTEIN DSBD"/>
    <property type="match status" value="1"/>
</dbReference>
<dbReference type="Pfam" id="PF11412">
    <property type="entry name" value="DsbD_N"/>
    <property type="match status" value="1"/>
</dbReference>
<dbReference type="Pfam" id="PF02683">
    <property type="entry name" value="DsbD_TM"/>
    <property type="match status" value="1"/>
</dbReference>
<dbReference type="Pfam" id="PF13098">
    <property type="entry name" value="Thioredoxin_2"/>
    <property type="match status" value="1"/>
</dbReference>
<dbReference type="SUPFAM" id="SSF74863">
    <property type="entry name" value="Thiol:disulfide interchange protein DsbD, N-terminal domain (DsbD-alpha)"/>
    <property type="match status" value="1"/>
</dbReference>
<dbReference type="SUPFAM" id="SSF52833">
    <property type="entry name" value="Thioredoxin-like"/>
    <property type="match status" value="1"/>
</dbReference>
<dbReference type="PROSITE" id="PS00194">
    <property type="entry name" value="THIOREDOXIN_1"/>
    <property type="match status" value="1"/>
</dbReference>
<dbReference type="PROSITE" id="PS51352">
    <property type="entry name" value="THIOREDOXIN_2"/>
    <property type="match status" value="1"/>
</dbReference>
<organism>
    <name type="scientific">Tatumella citrea</name>
    <name type="common">Pantoea citrea</name>
    <dbReference type="NCBI Taxonomy" id="53336"/>
    <lineage>
        <taxon>Bacteria</taxon>
        <taxon>Pseudomonadati</taxon>
        <taxon>Pseudomonadota</taxon>
        <taxon>Gammaproteobacteria</taxon>
        <taxon>Enterobacterales</taxon>
        <taxon>Erwiniaceae</taxon>
        <taxon>Tatumella</taxon>
    </lineage>
</organism>
<keyword id="KW-0997">Cell inner membrane</keyword>
<keyword id="KW-1003">Cell membrane</keyword>
<keyword id="KW-0201">Cytochrome c-type biogenesis</keyword>
<keyword id="KW-1015">Disulfide bond</keyword>
<keyword id="KW-0249">Electron transport</keyword>
<keyword id="KW-0472">Membrane</keyword>
<keyword id="KW-0520">NAD</keyword>
<keyword id="KW-0560">Oxidoreductase</keyword>
<keyword id="KW-0676">Redox-active center</keyword>
<keyword id="KW-0732">Signal</keyword>
<keyword id="KW-0812">Transmembrane</keyword>
<keyword id="KW-1133">Transmembrane helix</keyword>
<keyword id="KW-0813">Transport</keyword>
<feature type="signal peptide" evidence="2">
    <location>
        <begin position="1"/>
        <end position="22"/>
    </location>
</feature>
<feature type="chain" id="PRO_0000007379" description="Thiol:disulfide interchange protein DsbD">
    <location>
        <begin position="23"/>
        <end position="578"/>
    </location>
</feature>
<feature type="topological domain" description="Periplasmic" evidence="2">
    <location>
        <begin position="23"/>
        <end position="180"/>
    </location>
</feature>
<feature type="transmembrane region" description="Helical" evidence="2">
    <location>
        <begin position="181"/>
        <end position="201"/>
    </location>
</feature>
<feature type="topological domain" description="Cytoplasmic" evidence="2">
    <location>
        <begin position="202"/>
        <end position="216"/>
    </location>
</feature>
<feature type="transmembrane region" description="Helical" evidence="2">
    <location>
        <begin position="217"/>
        <end position="237"/>
    </location>
</feature>
<feature type="topological domain" description="Periplasmic" evidence="2">
    <location>
        <begin position="238"/>
        <end position="253"/>
    </location>
</feature>
<feature type="transmembrane region" description="Helical" evidence="2">
    <location>
        <begin position="254"/>
        <end position="274"/>
    </location>
</feature>
<feature type="topological domain" description="Cytoplasmic" evidence="2">
    <location>
        <begin position="275"/>
        <end position="306"/>
    </location>
</feature>
<feature type="transmembrane region" description="Helical" evidence="2">
    <location>
        <begin position="307"/>
        <end position="327"/>
    </location>
</feature>
<feature type="topological domain" description="Periplasmic" evidence="2">
    <location>
        <begin position="328"/>
        <end position="336"/>
    </location>
</feature>
<feature type="transmembrane region" description="Helical" evidence="2">
    <location>
        <begin position="337"/>
        <end position="357"/>
    </location>
</feature>
<feature type="topological domain" description="Cytoplasmic" evidence="2">
    <location>
        <begin position="358"/>
        <end position="367"/>
    </location>
</feature>
<feature type="transmembrane region" description="Helical" evidence="2">
    <location>
        <begin position="368"/>
        <end position="388"/>
    </location>
</feature>
<feature type="topological domain" description="Periplasmic" evidence="2">
    <location>
        <begin position="389"/>
        <end position="394"/>
    </location>
</feature>
<feature type="transmembrane region" description="Helical" evidence="2">
    <location>
        <begin position="395"/>
        <end position="415"/>
    </location>
</feature>
<feature type="topological domain" description="Cytoplasmic" evidence="2">
    <location>
        <begin position="416"/>
        <end position="428"/>
    </location>
</feature>
<feature type="transmembrane region" description="Helical" evidence="2">
    <location>
        <begin position="429"/>
        <end position="449"/>
    </location>
</feature>
<feature type="topological domain" description="Periplasmic" evidence="2">
    <location>
        <begin position="450"/>
        <end position="578"/>
    </location>
</feature>
<feature type="domain" description="Thioredoxin">
    <location>
        <begin position="436"/>
        <end position="577"/>
    </location>
</feature>
<feature type="disulfide bond" description="Redox-active" evidence="1">
    <location>
        <begin position="125"/>
        <end position="131"/>
    </location>
</feature>
<feature type="disulfide bond" description="Redox-active" evidence="1">
    <location>
        <begin position="193"/>
        <end position="315"/>
    </location>
</feature>
<feature type="disulfide bond" description="Redox-active" evidence="1">
    <location>
        <begin position="492"/>
        <end position="495"/>
    </location>
</feature>
<reference key="1">
    <citation type="journal article" date="2000" name="J. Bacteriol.">
        <title>Genetic and biochemical characterization of the pathway in Pantoea citrea leading to pink disease of pineapple.</title>
        <authorList>
            <person name="Pujol C.J."/>
            <person name="Kado C.I."/>
        </authorList>
    </citation>
    <scope>NUCLEOTIDE SEQUENCE [GENOMIC DNA]</scope>
    <source>
        <strain>1056R</strain>
    </source>
</reference>
<protein>
    <recommendedName>
        <fullName>Thiol:disulfide interchange protein DsbD</fullName>
        <ecNumber>1.8.1.8</ecNumber>
    </recommendedName>
    <alternativeName>
        <fullName>Protein-disulfide reductase</fullName>
        <shortName>Disulfide reductase</shortName>
    </alternativeName>
</protein>
<proteinExistence type="inferred from homology"/>
<gene>
    <name type="primary">dsbD</name>
</gene>
<evidence type="ECO:0000250" key="1"/>
<evidence type="ECO:0000255" key="2"/>
<evidence type="ECO:0000305" key="3"/>
<sequence>MVARLTRLIILALTLFSLHAQAGLFDSGSSPHFVTVNQAFGFDFSQNNHNVVLRWKVKPGYYLYRQQFSITGTNAVIAGIALPSGQPHEDEFFGKSQIFPQDVQIPVTLKSTLPGATLKISYQGCAAAGFCYPPETREVPLSQVSTTRSEAPATAAATPAPVPEPQSGPAVSRLPFSPLWALLIGIGIAFTPCVLPMYPLISAIILGGRRDVRASRILLLAFVYVQGMGLTYTLMGIVVAAAGLRFQAALQSPVILLSLSAVFILLALSMFGLFSLQLPSSLQTRLTLWSNRQQGGSLSGVFLMGALAGLICSPCTTAPLSAILLYIAQSGNMLAGGGTLYLYALGMGLPLIIVTLFGNKLLPKSGPWMQSVKEGFGFVILALPVFLIDRVAGDLWGMRLWSLLGVAFFGWAFALSLKSPKGWMRVLQIVWLLAALVAARPLQDWAFATPGVTASQEQALPFQNIGTVADLQQQLSQAQGKITMVDLYADWCVACKEFEKYTFTDPQVRQEFSQFRLVQANVTANSAQDNALLTHLNVLGLPTLLFFDANGHEIPDSRVTGYMNASQFLAHLRKLRAE</sequence>